<dbReference type="EC" id="2.5.1.7" evidence="1"/>
<dbReference type="EMBL" id="CP001127">
    <property type="protein sequence ID" value="ACF91522.1"/>
    <property type="molecule type" value="Genomic_DNA"/>
</dbReference>
<dbReference type="RefSeq" id="WP_000357289.1">
    <property type="nucleotide sequence ID" value="NC_011094.1"/>
</dbReference>
<dbReference type="SMR" id="B4TWF9"/>
<dbReference type="KEGG" id="sew:SeSA_A3499"/>
<dbReference type="HOGENOM" id="CLU_027387_0_0_6"/>
<dbReference type="UniPathway" id="UPA00219"/>
<dbReference type="Proteomes" id="UP000001865">
    <property type="component" value="Chromosome"/>
</dbReference>
<dbReference type="GO" id="GO:0005737">
    <property type="term" value="C:cytoplasm"/>
    <property type="evidence" value="ECO:0007669"/>
    <property type="project" value="UniProtKB-SubCell"/>
</dbReference>
<dbReference type="GO" id="GO:0008760">
    <property type="term" value="F:UDP-N-acetylglucosamine 1-carboxyvinyltransferase activity"/>
    <property type="evidence" value="ECO:0007669"/>
    <property type="project" value="UniProtKB-UniRule"/>
</dbReference>
<dbReference type="GO" id="GO:0051301">
    <property type="term" value="P:cell division"/>
    <property type="evidence" value="ECO:0007669"/>
    <property type="project" value="UniProtKB-KW"/>
</dbReference>
<dbReference type="GO" id="GO:0071555">
    <property type="term" value="P:cell wall organization"/>
    <property type="evidence" value="ECO:0007669"/>
    <property type="project" value="UniProtKB-KW"/>
</dbReference>
<dbReference type="GO" id="GO:0009252">
    <property type="term" value="P:peptidoglycan biosynthetic process"/>
    <property type="evidence" value="ECO:0007669"/>
    <property type="project" value="UniProtKB-UniRule"/>
</dbReference>
<dbReference type="GO" id="GO:0008360">
    <property type="term" value="P:regulation of cell shape"/>
    <property type="evidence" value="ECO:0007669"/>
    <property type="project" value="UniProtKB-KW"/>
</dbReference>
<dbReference type="GO" id="GO:0019277">
    <property type="term" value="P:UDP-N-acetylgalactosamine biosynthetic process"/>
    <property type="evidence" value="ECO:0007669"/>
    <property type="project" value="InterPro"/>
</dbReference>
<dbReference type="CDD" id="cd01555">
    <property type="entry name" value="UdpNAET"/>
    <property type="match status" value="1"/>
</dbReference>
<dbReference type="FunFam" id="3.65.10.10:FF:000002">
    <property type="entry name" value="UDP-N-acetylglucosamine 1-carboxyvinyltransferase"/>
    <property type="match status" value="1"/>
</dbReference>
<dbReference type="Gene3D" id="3.65.10.10">
    <property type="entry name" value="Enolpyruvate transferase domain"/>
    <property type="match status" value="2"/>
</dbReference>
<dbReference type="HAMAP" id="MF_00111">
    <property type="entry name" value="MurA"/>
    <property type="match status" value="1"/>
</dbReference>
<dbReference type="InterPro" id="IPR001986">
    <property type="entry name" value="Enolpyruvate_Tfrase_dom"/>
</dbReference>
<dbReference type="InterPro" id="IPR036968">
    <property type="entry name" value="Enolpyruvate_Tfrase_sf"/>
</dbReference>
<dbReference type="InterPro" id="IPR050068">
    <property type="entry name" value="MurA_subfamily"/>
</dbReference>
<dbReference type="InterPro" id="IPR013792">
    <property type="entry name" value="RNA3'P_cycl/enolpyr_Trfase_a/b"/>
</dbReference>
<dbReference type="InterPro" id="IPR005750">
    <property type="entry name" value="UDP_GlcNAc_COvinyl_MurA"/>
</dbReference>
<dbReference type="NCBIfam" id="TIGR01072">
    <property type="entry name" value="murA"/>
    <property type="match status" value="1"/>
</dbReference>
<dbReference type="NCBIfam" id="NF006873">
    <property type="entry name" value="PRK09369.1"/>
    <property type="match status" value="1"/>
</dbReference>
<dbReference type="PANTHER" id="PTHR43783">
    <property type="entry name" value="UDP-N-ACETYLGLUCOSAMINE 1-CARBOXYVINYLTRANSFERASE"/>
    <property type="match status" value="1"/>
</dbReference>
<dbReference type="PANTHER" id="PTHR43783:SF1">
    <property type="entry name" value="UDP-N-ACETYLGLUCOSAMINE 1-CARBOXYVINYLTRANSFERASE"/>
    <property type="match status" value="1"/>
</dbReference>
<dbReference type="Pfam" id="PF00275">
    <property type="entry name" value="EPSP_synthase"/>
    <property type="match status" value="1"/>
</dbReference>
<dbReference type="SUPFAM" id="SSF55205">
    <property type="entry name" value="EPT/RTPC-like"/>
    <property type="match status" value="1"/>
</dbReference>
<reference key="1">
    <citation type="journal article" date="2011" name="J. Bacteriol.">
        <title>Comparative genomics of 28 Salmonella enterica isolates: evidence for CRISPR-mediated adaptive sublineage evolution.</title>
        <authorList>
            <person name="Fricke W.F."/>
            <person name="Mammel M.K."/>
            <person name="McDermott P.F."/>
            <person name="Tartera C."/>
            <person name="White D.G."/>
            <person name="Leclerc J.E."/>
            <person name="Ravel J."/>
            <person name="Cebula T.A."/>
        </authorList>
    </citation>
    <scope>NUCLEOTIDE SEQUENCE [LARGE SCALE GENOMIC DNA]</scope>
    <source>
        <strain>CVM19633</strain>
    </source>
</reference>
<comment type="function">
    <text evidence="1">Cell wall formation. Adds enolpyruvyl to UDP-N-acetylglucosamine.</text>
</comment>
<comment type="catalytic activity">
    <reaction evidence="1">
        <text>phosphoenolpyruvate + UDP-N-acetyl-alpha-D-glucosamine = UDP-N-acetyl-3-O-(1-carboxyvinyl)-alpha-D-glucosamine + phosphate</text>
        <dbReference type="Rhea" id="RHEA:18681"/>
        <dbReference type="ChEBI" id="CHEBI:43474"/>
        <dbReference type="ChEBI" id="CHEBI:57705"/>
        <dbReference type="ChEBI" id="CHEBI:58702"/>
        <dbReference type="ChEBI" id="CHEBI:68483"/>
        <dbReference type="EC" id="2.5.1.7"/>
    </reaction>
</comment>
<comment type="pathway">
    <text evidence="1">Cell wall biogenesis; peptidoglycan biosynthesis.</text>
</comment>
<comment type="subcellular location">
    <subcellularLocation>
        <location evidence="1">Cytoplasm</location>
    </subcellularLocation>
</comment>
<comment type="similarity">
    <text evidence="1">Belongs to the EPSP synthase family. MurA subfamily.</text>
</comment>
<feature type="chain" id="PRO_1000094723" description="UDP-N-acetylglucosamine 1-carboxyvinyltransferase">
    <location>
        <begin position="1"/>
        <end position="419"/>
    </location>
</feature>
<feature type="active site" description="Proton donor" evidence="1">
    <location>
        <position position="115"/>
    </location>
</feature>
<feature type="binding site" evidence="1">
    <location>
        <begin position="22"/>
        <end position="23"/>
    </location>
    <ligand>
        <name>phosphoenolpyruvate</name>
        <dbReference type="ChEBI" id="CHEBI:58702"/>
    </ligand>
</feature>
<feature type="binding site" evidence="1">
    <location>
        <position position="91"/>
    </location>
    <ligand>
        <name>UDP-N-acetyl-alpha-D-glucosamine</name>
        <dbReference type="ChEBI" id="CHEBI:57705"/>
    </ligand>
</feature>
<feature type="binding site" evidence="1">
    <location>
        <begin position="120"/>
        <end position="124"/>
    </location>
    <ligand>
        <name>UDP-N-acetyl-alpha-D-glucosamine</name>
        <dbReference type="ChEBI" id="CHEBI:57705"/>
    </ligand>
</feature>
<feature type="binding site" evidence="1">
    <location>
        <begin position="160"/>
        <end position="163"/>
    </location>
    <ligand>
        <name>UDP-N-acetyl-alpha-D-glucosamine</name>
        <dbReference type="ChEBI" id="CHEBI:57705"/>
    </ligand>
</feature>
<feature type="binding site" evidence="1">
    <location>
        <position position="305"/>
    </location>
    <ligand>
        <name>UDP-N-acetyl-alpha-D-glucosamine</name>
        <dbReference type="ChEBI" id="CHEBI:57705"/>
    </ligand>
</feature>
<feature type="binding site" evidence="1">
    <location>
        <position position="327"/>
    </location>
    <ligand>
        <name>UDP-N-acetyl-alpha-D-glucosamine</name>
        <dbReference type="ChEBI" id="CHEBI:57705"/>
    </ligand>
</feature>
<feature type="modified residue" description="2-(S-cysteinyl)pyruvic acid O-phosphothioketal" evidence="1">
    <location>
        <position position="115"/>
    </location>
</feature>
<organism>
    <name type="scientific">Salmonella schwarzengrund (strain CVM19633)</name>
    <dbReference type="NCBI Taxonomy" id="439843"/>
    <lineage>
        <taxon>Bacteria</taxon>
        <taxon>Pseudomonadati</taxon>
        <taxon>Pseudomonadota</taxon>
        <taxon>Gammaproteobacteria</taxon>
        <taxon>Enterobacterales</taxon>
        <taxon>Enterobacteriaceae</taxon>
        <taxon>Salmonella</taxon>
    </lineage>
</organism>
<sequence>MDKFRVQGPTTLQGEVTISGAKNAALPILFAALLAEEPVEIQNVPKLKDVDTSMKLLSQLGAKVERNGSVHIDASQVNVFCAPYDLVKTMRASIWALGPLVARFGQGQVSLPGGCTIGARPVDLHITGLEQLGATIKLEEGYVKASVEGRLKGAHIVMDKVSVGATVTIMCAATLAEGTTIIENAAREPEIVDTANFLVTLGAKIAGQGTDRITIEGVERLGGGVYRVLPDRIETGTFLVAAAISRGKILCRNAQPDTLDAVLAKLRDAGADIEVGEDWISLDMHGKRPKAVNVRTAPHPAFPTDMQAQFTLLNLVAQGTGFITETVFENRFMHVPELSRMGARAEIESNTVICHGVETLSGAQVMATDLRASASLVLAGCIAEGTTIVDRIYHIDRGYERIEDKLRALGANIERVKGE</sequence>
<gene>
    <name evidence="1" type="primary">murA</name>
    <name type="ordered locus">SeSA_A3499</name>
</gene>
<proteinExistence type="inferred from homology"/>
<name>MURA_SALSV</name>
<keyword id="KW-0131">Cell cycle</keyword>
<keyword id="KW-0132">Cell division</keyword>
<keyword id="KW-0133">Cell shape</keyword>
<keyword id="KW-0961">Cell wall biogenesis/degradation</keyword>
<keyword id="KW-0963">Cytoplasm</keyword>
<keyword id="KW-0573">Peptidoglycan synthesis</keyword>
<keyword id="KW-0670">Pyruvate</keyword>
<keyword id="KW-0808">Transferase</keyword>
<protein>
    <recommendedName>
        <fullName evidence="1">UDP-N-acetylglucosamine 1-carboxyvinyltransferase</fullName>
        <ecNumber evidence="1">2.5.1.7</ecNumber>
    </recommendedName>
    <alternativeName>
        <fullName evidence="1">Enoylpyruvate transferase</fullName>
    </alternativeName>
    <alternativeName>
        <fullName evidence="1">UDP-N-acetylglucosamine enolpyruvyl transferase</fullName>
        <shortName evidence="1">EPT</shortName>
    </alternativeName>
</protein>
<accession>B4TWF9</accession>
<evidence type="ECO:0000255" key="1">
    <source>
        <dbReference type="HAMAP-Rule" id="MF_00111"/>
    </source>
</evidence>